<name>SELO_ENT38</name>
<proteinExistence type="inferred from homology"/>
<sequence>MTLSFTAHWHDELPGFYTALNPTPLKNARLIWHNASLANDLGVPASLFQPETGAGVWGGETLLPGMHPLAQVYSGHQFGVWAGQLGDGRGILLGEQQLENGHTVDWHLKGAGLTPYSRMGDGRAVLRSTIRESLASEAMHALGIPTSRALSIVTSDTQVARESMEQGAMLMRIAQSHVRFGHFEHFYYRREPEKVRQLADFVIEHHWPQWQNDADKYVLWFQDVVARTASLMACWQTVGFAHGVMNTDNMSILGLTIDYGPYGFLDDYQPDFICNHSDYQGRYSFENQPAVGLWNLQRLAQSLSPFIAVEALNDALDRYQDVLMQEYGKLMRRKLGLMTQEKGDNDILNALFALMSREGSDYTRTFRMLGQTEKHSAASPLRDEFIDRQGFDSWFATYRARLQREETPDDARNAHMNAVNPAMVLRNWLAQRAIDQAEQGDYAELHRLHDALRTPFNDRDDDYVSRPPDWGKRLEVSCSS</sequence>
<evidence type="ECO:0000255" key="1">
    <source>
        <dbReference type="HAMAP-Rule" id="MF_00692"/>
    </source>
</evidence>
<gene>
    <name evidence="1" type="primary">ydiU</name>
    <name evidence="1" type="synonym">selO</name>
    <name type="ordered locus">Ent638_1736</name>
</gene>
<protein>
    <recommendedName>
        <fullName evidence="1">Protein nucleotidyltransferase YdiU</fullName>
        <ecNumber evidence="1">2.7.7.-</ecNumber>
    </recommendedName>
    <alternativeName>
        <fullName evidence="1">Protein adenylyltransferase YdiU</fullName>
        <ecNumber evidence="1">2.7.7.108</ecNumber>
    </alternativeName>
    <alternativeName>
        <fullName evidence="1">Protein uridylyltransferase YdiU</fullName>
        <ecNumber evidence="1">2.7.7.-</ecNumber>
    </alternativeName>
</protein>
<organism>
    <name type="scientific">Enterobacter sp. (strain 638)</name>
    <dbReference type="NCBI Taxonomy" id="399742"/>
    <lineage>
        <taxon>Bacteria</taxon>
        <taxon>Pseudomonadati</taxon>
        <taxon>Pseudomonadota</taxon>
        <taxon>Gammaproteobacteria</taxon>
        <taxon>Enterobacterales</taxon>
        <taxon>Enterobacteriaceae</taxon>
        <taxon>Enterobacter</taxon>
    </lineage>
</organism>
<feature type="chain" id="PRO_1000062029" description="Protein nucleotidyltransferase YdiU">
    <location>
        <begin position="1"/>
        <end position="480"/>
    </location>
</feature>
<feature type="active site" description="Proton acceptor" evidence="1">
    <location>
        <position position="248"/>
    </location>
</feature>
<feature type="binding site" evidence="1">
    <location>
        <position position="86"/>
    </location>
    <ligand>
        <name>ATP</name>
        <dbReference type="ChEBI" id="CHEBI:30616"/>
    </ligand>
</feature>
<feature type="binding site" evidence="1">
    <location>
        <position position="88"/>
    </location>
    <ligand>
        <name>ATP</name>
        <dbReference type="ChEBI" id="CHEBI:30616"/>
    </ligand>
</feature>
<feature type="binding site" evidence="1">
    <location>
        <position position="89"/>
    </location>
    <ligand>
        <name>ATP</name>
        <dbReference type="ChEBI" id="CHEBI:30616"/>
    </ligand>
</feature>
<feature type="binding site" evidence="1">
    <location>
        <position position="109"/>
    </location>
    <ligand>
        <name>ATP</name>
        <dbReference type="ChEBI" id="CHEBI:30616"/>
    </ligand>
</feature>
<feature type="binding site" evidence="1">
    <location>
        <position position="121"/>
    </location>
    <ligand>
        <name>ATP</name>
        <dbReference type="ChEBI" id="CHEBI:30616"/>
    </ligand>
</feature>
<feature type="binding site" evidence="1">
    <location>
        <position position="122"/>
    </location>
    <ligand>
        <name>ATP</name>
        <dbReference type="ChEBI" id="CHEBI:30616"/>
    </ligand>
</feature>
<feature type="binding site" evidence="1">
    <location>
        <position position="172"/>
    </location>
    <ligand>
        <name>ATP</name>
        <dbReference type="ChEBI" id="CHEBI:30616"/>
    </ligand>
</feature>
<feature type="binding site" evidence="1">
    <location>
        <position position="179"/>
    </location>
    <ligand>
        <name>ATP</name>
        <dbReference type="ChEBI" id="CHEBI:30616"/>
    </ligand>
</feature>
<feature type="binding site" evidence="1">
    <location>
        <position position="249"/>
    </location>
    <ligand>
        <name>Mg(2+)</name>
        <dbReference type="ChEBI" id="CHEBI:18420"/>
    </ligand>
</feature>
<feature type="binding site" evidence="1">
    <location>
        <position position="258"/>
    </location>
    <ligand>
        <name>ATP</name>
        <dbReference type="ChEBI" id="CHEBI:30616"/>
    </ligand>
</feature>
<feature type="binding site" evidence="1">
    <location>
        <position position="258"/>
    </location>
    <ligand>
        <name>Mg(2+)</name>
        <dbReference type="ChEBI" id="CHEBI:18420"/>
    </ligand>
</feature>
<keyword id="KW-0067">ATP-binding</keyword>
<keyword id="KW-0460">Magnesium</keyword>
<keyword id="KW-0464">Manganese</keyword>
<keyword id="KW-0479">Metal-binding</keyword>
<keyword id="KW-0547">Nucleotide-binding</keyword>
<keyword id="KW-0548">Nucleotidyltransferase</keyword>
<keyword id="KW-0808">Transferase</keyword>
<dbReference type="EC" id="2.7.7.-" evidence="1"/>
<dbReference type="EC" id="2.7.7.108" evidence="1"/>
<dbReference type="EMBL" id="CP000653">
    <property type="protein sequence ID" value="ABP60415.1"/>
    <property type="molecule type" value="Genomic_DNA"/>
</dbReference>
<dbReference type="RefSeq" id="WP_012017130.1">
    <property type="nucleotide sequence ID" value="NC_009436.1"/>
</dbReference>
<dbReference type="SMR" id="A4W9N5"/>
<dbReference type="STRING" id="399742.Ent638_1736"/>
<dbReference type="KEGG" id="ent:Ent638_1736"/>
<dbReference type="eggNOG" id="COG0397">
    <property type="taxonomic scope" value="Bacteria"/>
</dbReference>
<dbReference type="HOGENOM" id="CLU_010245_4_0_6"/>
<dbReference type="OrthoDB" id="9776281at2"/>
<dbReference type="Proteomes" id="UP000000230">
    <property type="component" value="Chromosome"/>
</dbReference>
<dbReference type="GO" id="GO:0070733">
    <property type="term" value="F:AMPylase activity"/>
    <property type="evidence" value="ECO:0007669"/>
    <property type="project" value="RHEA"/>
</dbReference>
<dbReference type="GO" id="GO:0005524">
    <property type="term" value="F:ATP binding"/>
    <property type="evidence" value="ECO:0007669"/>
    <property type="project" value="UniProtKB-UniRule"/>
</dbReference>
<dbReference type="GO" id="GO:0000287">
    <property type="term" value="F:magnesium ion binding"/>
    <property type="evidence" value="ECO:0007669"/>
    <property type="project" value="UniProtKB-UniRule"/>
</dbReference>
<dbReference type="HAMAP" id="MF_00692">
    <property type="entry name" value="YdiU_SelO"/>
    <property type="match status" value="1"/>
</dbReference>
<dbReference type="InterPro" id="IPR054838">
    <property type="entry name" value="adnlytase_SelO"/>
</dbReference>
<dbReference type="InterPro" id="IPR003846">
    <property type="entry name" value="SelO"/>
</dbReference>
<dbReference type="NCBIfam" id="NF040880">
    <property type="entry name" value="adnlytase_SelO"/>
    <property type="match status" value="1"/>
</dbReference>
<dbReference type="NCBIfam" id="NF000658">
    <property type="entry name" value="PRK00029.1"/>
    <property type="match status" value="1"/>
</dbReference>
<dbReference type="PANTHER" id="PTHR32057">
    <property type="entry name" value="PROTEIN ADENYLYLTRANSFERASE SELO, MITOCHONDRIAL"/>
    <property type="match status" value="1"/>
</dbReference>
<dbReference type="PANTHER" id="PTHR32057:SF14">
    <property type="entry name" value="PROTEIN ADENYLYLTRANSFERASE SELO, MITOCHONDRIAL"/>
    <property type="match status" value="1"/>
</dbReference>
<dbReference type="Pfam" id="PF02696">
    <property type="entry name" value="SelO"/>
    <property type="match status" value="1"/>
</dbReference>
<accession>A4W9N5</accession>
<comment type="function">
    <text evidence="1">Nucleotidyltransferase involved in the post-translational modification of proteins. It can catalyze the addition of adenosine monophosphate (AMP) or uridine monophosphate (UMP) to a protein, resulting in modifications known as AMPylation and UMPylation.</text>
</comment>
<comment type="catalytic activity">
    <reaction evidence="1">
        <text>L-seryl-[protein] + ATP = 3-O-(5'-adenylyl)-L-seryl-[protein] + diphosphate</text>
        <dbReference type="Rhea" id="RHEA:58120"/>
        <dbReference type="Rhea" id="RHEA-COMP:9863"/>
        <dbReference type="Rhea" id="RHEA-COMP:15073"/>
        <dbReference type="ChEBI" id="CHEBI:29999"/>
        <dbReference type="ChEBI" id="CHEBI:30616"/>
        <dbReference type="ChEBI" id="CHEBI:33019"/>
        <dbReference type="ChEBI" id="CHEBI:142516"/>
        <dbReference type="EC" id="2.7.7.108"/>
    </reaction>
</comment>
<comment type="catalytic activity">
    <reaction evidence="1">
        <text>L-threonyl-[protein] + ATP = 3-O-(5'-adenylyl)-L-threonyl-[protein] + diphosphate</text>
        <dbReference type="Rhea" id="RHEA:54292"/>
        <dbReference type="Rhea" id="RHEA-COMP:11060"/>
        <dbReference type="Rhea" id="RHEA-COMP:13847"/>
        <dbReference type="ChEBI" id="CHEBI:30013"/>
        <dbReference type="ChEBI" id="CHEBI:30616"/>
        <dbReference type="ChEBI" id="CHEBI:33019"/>
        <dbReference type="ChEBI" id="CHEBI:138113"/>
        <dbReference type="EC" id="2.7.7.108"/>
    </reaction>
</comment>
<comment type="catalytic activity">
    <reaction evidence="1">
        <text>L-tyrosyl-[protein] + ATP = O-(5'-adenylyl)-L-tyrosyl-[protein] + diphosphate</text>
        <dbReference type="Rhea" id="RHEA:54288"/>
        <dbReference type="Rhea" id="RHEA-COMP:10136"/>
        <dbReference type="Rhea" id="RHEA-COMP:13846"/>
        <dbReference type="ChEBI" id="CHEBI:30616"/>
        <dbReference type="ChEBI" id="CHEBI:33019"/>
        <dbReference type="ChEBI" id="CHEBI:46858"/>
        <dbReference type="ChEBI" id="CHEBI:83624"/>
        <dbReference type="EC" id="2.7.7.108"/>
    </reaction>
</comment>
<comment type="catalytic activity">
    <reaction evidence="1">
        <text>L-histidyl-[protein] + UTP = N(tele)-(5'-uridylyl)-L-histidyl-[protein] + diphosphate</text>
        <dbReference type="Rhea" id="RHEA:83891"/>
        <dbReference type="Rhea" id="RHEA-COMP:9745"/>
        <dbReference type="Rhea" id="RHEA-COMP:20239"/>
        <dbReference type="ChEBI" id="CHEBI:29979"/>
        <dbReference type="ChEBI" id="CHEBI:33019"/>
        <dbReference type="ChEBI" id="CHEBI:46398"/>
        <dbReference type="ChEBI" id="CHEBI:233474"/>
    </reaction>
</comment>
<comment type="catalytic activity">
    <reaction evidence="1">
        <text>L-seryl-[protein] + UTP = O-(5'-uridylyl)-L-seryl-[protein] + diphosphate</text>
        <dbReference type="Rhea" id="RHEA:64604"/>
        <dbReference type="Rhea" id="RHEA-COMP:9863"/>
        <dbReference type="Rhea" id="RHEA-COMP:16635"/>
        <dbReference type="ChEBI" id="CHEBI:29999"/>
        <dbReference type="ChEBI" id="CHEBI:33019"/>
        <dbReference type="ChEBI" id="CHEBI:46398"/>
        <dbReference type="ChEBI" id="CHEBI:156051"/>
    </reaction>
</comment>
<comment type="catalytic activity">
    <reaction evidence="1">
        <text>L-tyrosyl-[protein] + UTP = O-(5'-uridylyl)-L-tyrosyl-[protein] + diphosphate</text>
        <dbReference type="Rhea" id="RHEA:83887"/>
        <dbReference type="Rhea" id="RHEA-COMP:10136"/>
        <dbReference type="Rhea" id="RHEA-COMP:20238"/>
        <dbReference type="ChEBI" id="CHEBI:33019"/>
        <dbReference type="ChEBI" id="CHEBI:46398"/>
        <dbReference type="ChEBI" id="CHEBI:46858"/>
        <dbReference type="ChEBI" id="CHEBI:90602"/>
    </reaction>
</comment>
<comment type="cofactor">
    <cofactor evidence="1">
        <name>Mg(2+)</name>
        <dbReference type="ChEBI" id="CHEBI:18420"/>
    </cofactor>
    <cofactor evidence="1">
        <name>Mn(2+)</name>
        <dbReference type="ChEBI" id="CHEBI:29035"/>
    </cofactor>
</comment>
<comment type="similarity">
    <text evidence="1">Belongs to the SELO family.</text>
</comment>
<reference key="1">
    <citation type="journal article" date="2010" name="PLoS Genet.">
        <title>Genome sequence of the plant growth promoting endophytic bacterium Enterobacter sp. 638.</title>
        <authorList>
            <person name="Taghavi S."/>
            <person name="van der Lelie D."/>
            <person name="Hoffman A."/>
            <person name="Zhang Y.B."/>
            <person name="Walla M.D."/>
            <person name="Vangronsveld J."/>
            <person name="Newman L."/>
            <person name="Monchy S."/>
        </authorList>
    </citation>
    <scope>NUCLEOTIDE SEQUENCE [LARGE SCALE GENOMIC DNA]</scope>
    <source>
        <strain>638</strain>
    </source>
</reference>